<protein>
    <recommendedName>
        <fullName evidence="1">D-aminoacyl-tRNA deacylase</fullName>
        <shortName evidence="1">DTD</shortName>
        <ecNumber evidence="1">3.1.1.96</ecNumber>
    </recommendedName>
    <alternativeName>
        <fullName evidence="1">Gly-tRNA(Ala) deacylase</fullName>
    </alternativeName>
</protein>
<feature type="chain" id="PRO_0000164611" description="D-aminoacyl-tRNA deacylase">
    <location>
        <begin position="1"/>
        <end position="149"/>
    </location>
</feature>
<feature type="short sequence motif" description="Gly-cisPro motif, important for rejection of L-amino acids" evidence="1">
    <location>
        <begin position="137"/>
        <end position="138"/>
    </location>
</feature>
<sequence length="149" mass="16519">MRAVVQRVSEAKVVVGEETVGAIKKGLLVFVGVGKNDTEEDCEWLADKVSGLRIFEDEDGKMNLSVKDINGEVLVVSQFTLYGDCRRGKRPSFTEAAPPDKGKALYEKFVELLRKKGLKVETGKFRAHMHVHLVNDGPVTILLDSSKLF</sequence>
<proteinExistence type="inferred from homology"/>
<gene>
    <name evidence="1" type="primary">dtd</name>
    <name type="ordered locus">TM_0730</name>
</gene>
<organism>
    <name type="scientific">Thermotoga maritima (strain ATCC 43589 / DSM 3109 / JCM 10099 / NBRC 100826 / MSB8)</name>
    <dbReference type="NCBI Taxonomy" id="243274"/>
    <lineage>
        <taxon>Bacteria</taxon>
        <taxon>Thermotogati</taxon>
        <taxon>Thermotogota</taxon>
        <taxon>Thermotogae</taxon>
        <taxon>Thermotogales</taxon>
        <taxon>Thermotogaceae</taxon>
        <taxon>Thermotoga</taxon>
    </lineage>
</organism>
<comment type="function">
    <text evidence="1">An aminoacyl-tRNA editing enzyme that deacylates mischarged D-aminoacyl-tRNAs. Also deacylates mischarged glycyl-tRNA(Ala), protecting cells against glycine mischarging by AlaRS. Acts via tRNA-based rather than protein-based catalysis; rejects L-amino acids rather than detecting D-amino acids in the active site. By recycling D-aminoacyl-tRNA to D-amino acids and free tRNA molecules, this enzyme counteracts the toxicity associated with the formation of D-aminoacyl-tRNA entities in vivo and helps enforce protein L-homochirality.</text>
</comment>
<comment type="catalytic activity">
    <reaction evidence="1">
        <text>glycyl-tRNA(Ala) + H2O = tRNA(Ala) + glycine + H(+)</text>
        <dbReference type="Rhea" id="RHEA:53744"/>
        <dbReference type="Rhea" id="RHEA-COMP:9657"/>
        <dbReference type="Rhea" id="RHEA-COMP:13640"/>
        <dbReference type="ChEBI" id="CHEBI:15377"/>
        <dbReference type="ChEBI" id="CHEBI:15378"/>
        <dbReference type="ChEBI" id="CHEBI:57305"/>
        <dbReference type="ChEBI" id="CHEBI:78442"/>
        <dbReference type="ChEBI" id="CHEBI:78522"/>
        <dbReference type="EC" id="3.1.1.96"/>
    </reaction>
</comment>
<comment type="catalytic activity">
    <reaction evidence="1">
        <text>a D-aminoacyl-tRNA + H2O = a tRNA + a D-alpha-amino acid + H(+)</text>
        <dbReference type="Rhea" id="RHEA:13953"/>
        <dbReference type="Rhea" id="RHEA-COMP:10123"/>
        <dbReference type="Rhea" id="RHEA-COMP:10124"/>
        <dbReference type="ChEBI" id="CHEBI:15377"/>
        <dbReference type="ChEBI" id="CHEBI:15378"/>
        <dbReference type="ChEBI" id="CHEBI:59871"/>
        <dbReference type="ChEBI" id="CHEBI:78442"/>
        <dbReference type="ChEBI" id="CHEBI:79333"/>
        <dbReference type="EC" id="3.1.1.96"/>
    </reaction>
</comment>
<comment type="subunit">
    <text evidence="1">Homodimer.</text>
</comment>
<comment type="subcellular location">
    <subcellularLocation>
        <location evidence="1">Cytoplasm</location>
    </subcellularLocation>
</comment>
<comment type="domain">
    <text evidence="1">A Gly-cisPro motif from one monomer fits into the active site of the other monomer to allow specific chiral rejection of L-amino acids.</text>
</comment>
<comment type="similarity">
    <text evidence="1">Belongs to the DTD family.</text>
</comment>
<name>DTD_THEMA</name>
<evidence type="ECO:0000255" key="1">
    <source>
        <dbReference type="HAMAP-Rule" id="MF_00518"/>
    </source>
</evidence>
<dbReference type="EC" id="3.1.1.96" evidence="1"/>
<dbReference type="EMBL" id="AE000512">
    <property type="protein sequence ID" value="AAD35812.1"/>
    <property type="molecule type" value="Genomic_DNA"/>
</dbReference>
<dbReference type="PIR" id="E72338">
    <property type="entry name" value="E72338"/>
</dbReference>
<dbReference type="RefSeq" id="NP_228539.1">
    <property type="nucleotide sequence ID" value="NC_000853.1"/>
</dbReference>
<dbReference type="RefSeq" id="WP_004080996.1">
    <property type="nucleotide sequence ID" value="NC_000853.1"/>
</dbReference>
<dbReference type="SMR" id="Q9WZI9"/>
<dbReference type="FunCoup" id="Q9WZI9">
    <property type="interactions" value="288"/>
</dbReference>
<dbReference type="STRING" id="243274.TM_0730"/>
<dbReference type="PaxDb" id="243274-THEMA_01005"/>
<dbReference type="EnsemblBacteria" id="AAD35812">
    <property type="protein sequence ID" value="AAD35812"/>
    <property type="gene ID" value="TM_0730"/>
</dbReference>
<dbReference type="KEGG" id="tma:TM0730"/>
<dbReference type="KEGG" id="tmi:THEMA_01005"/>
<dbReference type="KEGG" id="tmm:Tmari_0731"/>
<dbReference type="KEGG" id="tmw:THMA_0748"/>
<dbReference type="eggNOG" id="COG1490">
    <property type="taxonomic scope" value="Bacteria"/>
</dbReference>
<dbReference type="InParanoid" id="Q9WZI9"/>
<dbReference type="OrthoDB" id="9801395at2"/>
<dbReference type="Proteomes" id="UP000008183">
    <property type="component" value="Chromosome"/>
</dbReference>
<dbReference type="GO" id="GO:0005737">
    <property type="term" value="C:cytoplasm"/>
    <property type="evidence" value="ECO:0000318"/>
    <property type="project" value="GO_Central"/>
</dbReference>
<dbReference type="GO" id="GO:0051500">
    <property type="term" value="F:D-tyrosyl-tRNA(Tyr) deacylase activity"/>
    <property type="evidence" value="ECO:0000318"/>
    <property type="project" value="GO_Central"/>
</dbReference>
<dbReference type="GO" id="GO:0106026">
    <property type="term" value="F:Gly-tRNA(Ala) deacylase activity"/>
    <property type="evidence" value="ECO:0007669"/>
    <property type="project" value="UniProtKB-UniRule"/>
</dbReference>
<dbReference type="GO" id="GO:0043908">
    <property type="term" value="F:Ser(Gly)-tRNA(Ala) hydrolase activity"/>
    <property type="evidence" value="ECO:0007669"/>
    <property type="project" value="UniProtKB-UniRule"/>
</dbReference>
<dbReference type="GO" id="GO:0000049">
    <property type="term" value="F:tRNA binding"/>
    <property type="evidence" value="ECO:0007669"/>
    <property type="project" value="UniProtKB-UniRule"/>
</dbReference>
<dbReference type="GO" id="GO:0019478">
    <property type="term" value="P:D-amino acid catabolic process"/>
    <property type="evidence" value="ECO:0007669"/>
    <property type="project" value="UniProtKB-UniRule"/>
</dbReference>
<dbReference type="GO" id="GO:0006399">
    <property type="term" value="P:tRNA metabolic process"/>
    <property type="evidence" value="ECO:0000318"/>
    <property type="project" value="GO_Central"/>
</dbReference>
<dbReference type="CDD" id="cd00563">
    <property type="entry name" value="Dtyr_deacylase"/>
    <property type="match status" value="1"/>
</dbReference>
<dbReference type="FunFam" id="3.50.80.10:FF:000001">
    <property type="entry name" value="D-aminoacyl-tRNA deacylase"/>
    <property type="match status" value="1"/>
</dbReference>
<dbReference type="Gene3D" id="3.50.80.10">
    <property type="entry name" value="D-tyrosyl-tRNA(Tyr) deacylase"/>
    <property type="match status" value="1"/>
</dbReference>
<dbReference type="HAMAP" id="MF_00518">
    <property type="entry name" value="Deacylase_Dtd"/>
    <property type="match status" value="1"/>
</dbReference>
<dbReference type="InterPro" id="IPR003732">
    <property type="entry name" value="Daa-tRNA_deacyls_DTD"/>
</dbReference>
<dbReference type="InterPro" id="IPR023509">
    <property type="entry name" value="DTD-like_sf"/>
</dbReference>
<dbReference type="NCBIfam" id="TIGR00256">
    <property type="entry name" value="D-aminoacyl-tRNA deacylase"/>
    <property type="match status" value="1"/>
</dbReference>
<dbReference type="PANTHER" id="PTHR10472:SF5">
    <property type="entry name" value="D-AMINOACYL-TRNA DEACYLASE 1"/>
    <property type="match status" value="1"/>
</dbReference>
<dbReference type="PANTHER" id="PTHR10472">
    <property type="entry name" value="D-TYROSYL-TRNA TYR DEACYLASE"/>
    <property type="match status" value="1"/>
</dbReference>
<dbReference type="Pfam" id="PF02580">
    <property type="entry name" value="Tyr_Deacylase"/>
    <property type="match status" value="1"/>
</dbReference>
<dbReference type="SUPFAM" id="SSF69500">
    <property type="entry name" value="DTD-like"/>
    <property type="match status" value="1"/>
</dbReference>
<reference key="1">
    <citation type="journal article" date="1999" name="Nature">
        <title>Evidence for lateral gene transfer between Archaea and Bacteria from genome sequence of Thermotoga maritima.</title>
        <authorList>
            <person name="Nelson K.E."/>
            <person name="Clayton R.A."/>
            <person name="Gill S.R."/>
            <person name="Gwinn M.L."/>
            <person name="Dodson R.J."/>
            <person name="Haft D.H."/>
            <person name="Hickey E.K."/>
            <person name="Peterson J.D."/>
            <person name="Nelson W.C."/>
            <person name="Ketchum K.A."/>
            <person name="McDonald L.A."/>
            <person name="Utterback T.R."/>
            <person name="Malek J.A."/>
            <person name="Linher K.D."/>
            <person name="Garrett M.M."/>
            <person name="Stewart A.M."/>
            <person name="Cotton M.D."/>
            <person name="Pratt M.S."/>
            <person name="Phillips C.A."/>
            <person name="Richardson D.L."/>
            <person name="Heidelberg J.F."/>
            <person name="Sutton G.G."/>
            <person name="Fleischmann R.D."/>
            <person name="Eisen J.A."/>
            <person name="White O."/>
            <person name="Salzberg S.L."/>
            <person name="Smith H.O."/>
            <person name="Venter J.C."/>
            <person name="Fraser C.M."/>
        </authorList>
    </citation>
    <scope>NUCLEOTIDE SEQUENCE [LARGE SCALE GENOMIC DNA]</scope>
    <source>
        <strain>ATCC 43589 / DSM 3109 / JCM 10099 / NBRC 100826 / MSB8</strain>
    </source>
</reference>
<keyword id="KW-0963">Cytoplasm</keyword>
<keyword id="KW-0378">Hydrolase</keyword>
<keyword id="KW-1185">Reference proteome</keyword>
<keyword id="KW-0694">RNA-binding</keyword>
<keyword id="KW-0820">tRNA-binding</keyword>
<accession>Q9WZI9</accession>